<organism>
    <name type="scientific">Xanthomonas euvesicatoria pv. vesicatoria (strain 85-10)</name>
    <name type="common">Xanthomonas campestris pv. vesicatoria</name>
    <dbReference type="NCBI Taxonomy" id="316273"/>
    <lineage>
        <taxon>Bacteria</taxon>
        <taxon>Pseudomonadati</taxon>
        <taxon>Pseudomonadota</taxon>
        <taxon>Gammaproteobacteria</taxon>
        <taxon>Lysobacterales</taxon>
        <taxon>Lysobacteraceae</taxon>
        <taxon>Xanthomonas</taxon>
    </lineage>
</organism>
<comment type="function">
    <text evidence="1">Reversibly transfers an adenylyl group from ATP to 4'-phosphopantetheine, yielding dephospho-CoA (dPCoA) and pyrophosphate.</text>
</comment>
<comment type="catalytic activity">
    <reaction evidence="1">
        <text>(R)-4'-phosphopantetheine + ATP + H(+) = 3'-dephospho-CoA + diphosphate</text>
        <dbReference type="Rhea" id="RHEA:19801"/>
        <dbReference type="ChEBI" id="CHEBI:15378"/>
        <dbReference type="ChEBI" id="CHEBI:30616"/>
        <dbReference type="ChEBI" id="CHEBI:33019"/>
        <dbReference type="ChEBI" id="CHEBI:57328"/>
        <dbReference type="ChEBI" id="CHEBI:61723"/>
        <dbReference type="EC" id="2.7.7.3"/>
    </reaction>
</comment>
<comment type="cofactor">
    <cofactor evidence="1">
        <name>Mg(2+)</name>
        <dbReference type="ChEBI" id="CHEBI:18420"/>
    </cofactor>
</comment>
<comment type="pathway">
    <text evidence="1">Cofactor biosynthesis; coenzyme A biosynthesis; CoA from (R)-pantothenate: step 4/5.</text>
</comment>
<comment type="subunit">
    <text evidence="1">Homohexamer.</text>
</comment>
<comment type="subcellular location">
    <subcellularLocation>
        <location evidence="1">Cytoplasm</location>
    </subcellularLocation>
</comment>
<comment type="similarity">
    <text evidence="1">Belongs to the bacterial CoaD family.</text>
</comment>
<protein>
    <recommendedName>
        <fullName evidence="1">Phosphopantetheine adenylyltransferase</fullName>
        <ecNumber evidence="1">2.7.7.3</ecNumber>
    </recommendedName>
    <alternativeName>
        <fullName evidence="1">Dephospho-CoA pyrophosphorylase</fullName>
    </alternativeName>
    <alternativeName>
        <fullName evidence="1">Pantetheine-phosphate adenylyltransferase</fullName>
        <shortName evidence="1">PPAT</shortName>
    </alternativeName>
</protein>
<sequence>MSVANSRTAVYPGTFDPITNGHIDLVNRAAPLFERVVVGVAYSPSKGPALSLERRVALAQEALAAHTNVEVRGFDTLLAHFVREMGAGVLLRGLRAVSDFEYEFQMASMNRHLIPEVETLFLTPAEQYSFISSSLVREIARLGGDVSGFVPASVVEALRQVRQSRAQA</sequence>
<proteinExistence type="inferred from homology"/>
<feature type="chain" id="PRO_1000011276" description="Phosphopantetheine adenylyltransferase">
    <location>
        <begin position="1"/>
        <end position="168"/>
    </location>
</feature>
<feature type="binding site" evidence="1">
    <location>
        <begin position="14"/>
        <end position="15"/>
    </location>
    <ligand>
        <name>ATP</name>
        <dbReference type="ChEBI" id="CHEBI:30616"/>
    </ligand>
</feature>
<feature type="binding site" evidence="1">
    <location>
        <position position="14"/>
    </location>
    <ligand>
        <name>substrate</name>
    </ligand>
</feature>
<feature type="binding site" evidence="1">
    <location>
        <position position="22"/>
    </location>
    <ligand>
        <name>ATP</name>
        <dbReference type="ChEBI" id="CHEBI:30616"/>
    </ligand>
</feature>
<feature type="binding site" evidence="1">
    <location>
        <position position="46"/>
    </location>
    <ligand>
        <name>substrate</name>
    </ligand>
</feature>
<feature type="binding site" evidence="1">
    <location>
        <position position="78"/>
    </location>
    <ligand>
        <name>substrate</name>
    </ligand>
</feature>
<feature type="binding site" evidence="1">
    <location>
        <position position="92"/>
    </location>
    <ligand>
        <name>substrate</name>
    </ligand>
</feature>
<feature type="binding site" evidence="1">
    <location>
        <begin position="93"/>
        <end position="95"/>
    </location>
    <ligand>
        <name>ATP</name>
        <dbReference type="ChEBI" id="CHEBI:30616"/>
    </ligand>
</feature>
<feature type="binding site" evidence="1">
    <location>
        <position position="103"/>
    </location>
    <ligand>
        <name>ATP</name>
        <dbReference type="ChEBI" id="CHEBI:30616"/>
    </ligand>
</feature>
<feature type="binding site" evidence="1">
    <location>
        <begin position="128"/>
        <end position="134"/>
    </location>
    <ligand>
        <name>ATP</name>
        <dbReference type="ChEBI" id="CHEBI:30616"/>
    </ligand>
</feature>
<feature type="site" description="Transition state stabilizer" evidence="1">
    <location>
        <position position="22"/>
    </location>
</feature>
<keyword id="KW-0067">ATP-binding</keyword>
<keyword id="KW-0173">Coenzyme A biosynthesis</keyword>
<keyword id="KW-0963">Cytoplasm</keyword>
<keyword id="KW-0460">Magnesium</keyword>
<keyword id="KW-0547">Nucleotide-binding</keyword>
<keyword id="KW-0548">Nucleotidyltransferase</keyword>
<keyword id="KW-0808">Transferase</keyword>
<accession>Q3BS23</accession>
<dbReference type="EC" id="2.7.7.3" evidence="1"/>
<dbReference type="EMBL" id="AM039952">
    <property type="protein sequence ID" value="CAJ24386.1"/>
    <property type="molecule type" value="Genomic_DNA"/>
</dbReference>
<dbReference type="RefSeq" id="WP_008574388.1">
    <property type="nucleotide sequence ID" value="NZ_CP017190.1"/>
</dbReference>
<dbReference type="SMR" id="Q3BS23"/>
<dbReference type="STRING" id="456327.BJD11_09310"/>
<dbReference type="GeneID" id="97510834"/>
<dbReference type="KEGG" id="xcv:XCV2709"/>
<dbReference type="eggNOG" id="COG0669">
    <property type="taxonomic scope" value="Bacteria"/>
</dbReference>
<dbReference type="HOGENOM" id="CLU_100149_0_1_6"/>
<dbReference type="UniPathway" id="UPA00241">
    <property type="reaction ID" value="UER00355"/>
</dbReference>
<dbReference type="Proteomes" id="UP000007069">
    <property type="component" value="Chromosome"/>
</dbReference>
<dbReference type="GO" id="GO:0005737">
    <property type="term" value="C:cytoplasm"/>
    <property type="evidence" value="ECO:0007669"/>
    <property type="project" value="UniProtKB-SubCell"/>
</dbReference>
<dbReference type="GO" id="GO:0005524">
    <property type="term" value="F:ATP binding"/>
    <property type="evidence" value="ECO:0007669"/>
    <property type="project" value="UniProtKB-KW"/>
</dbReference>
<dbReference type="GO" id="GO:0004595">
    <property type="term" value="F:pantetheine-phosphate adenylyltransferase activity"/>
    <property type="evidence" value="ECO:0007669"/>
    <property type="project" value="UniProtKB-UniRule"/>
</dbReference>
<dbReference type="GO" id="GO:0015937">
    <property type="term" value="P:coenzyme A biosynthetic process"/>
    <property type="evidence" value="ECO:0007669"/>
    <property type="project" value="UniProtKB-UniRule"/>
</dbReference>
<dbReference type="CDD" id="cd02163">
    <property type="entry name" value="PPAT"/>
    <property type="match status" value="1"/>
</dbReference>
<dbReference type="Gene3D" id="3.40.50.620">
    <property type="entry name" value="HUPs"/>
    <property type="match status" value="1"/>
</dbReference>
<dbReference type="HAMAP" id="MF_00151">
    <property type="entry name" value="PPAT_bact"/>
    <property type="match status" value="1"/>
</dbReference>
<dbReference type="InterPro" id="IPR004821">
    <property type="entry name" value="Cyt_trans-like"/>
</dbReference>
<dbReference type="InterPro" id="IPR001980">
    <property type="entry name" value="PPAT"/>
</dbReference>
<dbReference type="InterPro" id="IPR014729">
    <property type="entry name" value="Rossmann-like_a/b/a_fold"/>
</dbReference>
<dbReference type="NCBIfam" id="TIGR01510">
    <property type="entry name" value="coaD_prev_kdtB"/>
    <property type="match status" value="1"/>
</dbReference>
<dbReference type="NCBIfam" id="TIGR00125">
    <property type="entry name" value="cyt_tran_rel"/>
    <property type="match status" value="1"/>
</dbReference>
<dbReference type="PANTHER" id="PTHR21342">
    <property type="entry name" value="PHOSPHOPANTETHEINE ADENYLYLTRANSFERASE"/>
    <property type="match status" value="1"/>
</dbReference>
<dbReference type="PANTHER" id="PTHR21342:SF1">
    <property type="entry name" value="PHOSPHOPANTETHEINE ADENYLYLTRANSFERASE"/>
    <property type="match status" value="1"/>
</dbReference>
<dbReference type="Pfam" id="PF01467">
    <property type="entry name" value="CTP_transf_like"/>
    <property type="match status" value="1"/>
</dbReference>
<dbReference type="PRINTS" id="PR01020">
    <property type="entry name" value="LPSBIOSNTHSS"/>
</dbReference>
<dbReference type="SUPFAM" id="SSF52374">
    <property type="entry name" value="Nucleotidylyl transferase"/>
    <property type="match status" value="1"/>
</dbReference>
<reference key="1">
    <citation type="journal article" date="2005" name="J. Bacteriol.">
        <title>Insights into genome plasticity and pathogenicity of the plant pathogenic Bacterium Xanthomonas campestris pv. vesicatoria revealed by the complete genome sequence.</title>
        <authorList>
            <person name="Thieme F."/>
            <person name="Koebnik R."/>
            <person name="Bekel T."/>
            <person name="Berger C."/>
            <person name="Boch J."/>
            <person name="Buettner D."/>
            <person name="Caldana C."/>
            <person name="Gaigalat L."/>
            <person name="Goesmann A."/>
            <person name="Kay S."/>
            <person name="Kirchner O."/>
            <person name="Lanz C."/>
            <person name="Linke B."/>
            <person name="McHardy A.C."/>
            <person name="Meyer F."/>
            <person name="Mittenhuber G."/>
            <person name="Nies D.H."/>
            <person name="Niesbach-Kloesgen U."/>
            <person name="Patschkowski T."/>
            <person name="Rueckert C."/>
            <person name="Rupp O."/>
            <person name="Schneiker S."/>
            <person name="Schuster S.C."/>
            <person name="Vorhoelter F.J."/>
            <person name="Weber E."/>
            <person name="Puehler A."/>
            <person name="Bonas U."/>
            <person name="Bartels D."/>
            <person name="Kaiser O."/>
        </authorList>
    </citation>
    <scope>NUCLEOTIDE SEQUENCE [LARGE SCALE GENOMIC DNA]</scope>
    <source>
        <strain>85-10</strain>
    </source>
</reference>
<gene>
    <name evidence="1" type="primary">coaD</name>
    <name type="ordered locus">XCV2709</name>
</gene>
<evidence type="ECO:0000255" key="1">
    <source>
        <dbReference type="HAMAP-Rule" id="MF_00151"/>
    </source>
</evidence>
<name>COAD_XANE5</name>